<sequence length="269" mass="30434">MNSPYQPTILFFDSGMGGFSVYKETKQLLPDCHYLYCFDNAFFPYSEKSEEEIIQRTLKICQKIDRTFPLDLIVIACNTASTVVLPALRAHFAIPVVGTVPAIKPAAECSETKHIGLLATKGTVKRAYVADLIAQYARDCTVEKLGSTKLVEIAEQKLHGKAVDLHALKQELAPWQSIQNLDTVVLGCTHFPLIKEEIKWCLPQVRFFVDSGKAIALRVKTLLSKIDIQSKTNEKNLIFCTQFFEDETQFQKVIHFWGFEQLINLNMKA</sequence>
<protein>
    <recommendedName>
        <fullName evidence="1">Glutamate racemase</fullName>
        <ecNumber evidence="1">5.1.1.3</ecNumber>
    </recommendedName>
</protein>
<feature type="chain" id="PRO_0000095495" description="Glutamate racemase">
    <location>
        <begin position="1"/>
        <end position="269"/>
    </location>
</feature>
<feature type="active site" description="Proton donor/acceptor" evidence="1">
    <location>
        <position position="77"/>
    </location>
</feature>
<feature type="active site" description="Proton donor/acceptor" evidence="1">
    <location>
        <position position="188"/>
    </location>
</feature>
<feature type="binding site" evidence="1">
    <location>
        <begin position="13"/>
        <end position="14"/>
    </location>
    <ligand>
        <name>substrate</name>
    </ligand>
</feature>
<feature type="binding site" evidence="1">
    <location>
        <begin position="45"/>
        <end position="46"/>
    </location>
    <ligand>
        <name>substrate</name>
    </ligand>
</feature>
<feature type="binding site" evidence="1">
    <location>
        <begin position="78"/>
        <end position="79"/>
    </location>
    <ligand>
        <name>substrate</name>
    </ligand>
</feature>
<feature type="binding site" evidence="1">
    <location>
        <begin position="189"/>
        <end position="190"/>
    </location>
    <ligand>
        <name>substrate</name>
    </ligand>
</feature>
<keyword id="KW-0133">Cell shape</keyword>
<keyword id="KW-0961">Cell wall biogenesis/degradation</keyword>
<keyword id="KW-0413">Isomerase</keyword>
<keyword id="KW-0573">Peptidoglycan synthesis</keyword>
<keyword id="KW-1185">Reference proteome</keyword>
<reference key="1">
    <citation type="journal article" date="2001" name="Proc. Natl. Acad. Sci. U.S.A.">
        <title>Complete genomic sequence of Pasteurella multocida Pm70.</title>
        <authorList>
            <person name="May B.J."/>
            <person name="Zhang Q."/>
            <person name="Li L.L."/>
            <person name="Paustian M.L."/>
            <person name="Whittam T.S."/>
            <person name="Kapur V."/>
        </authorList>
    </citation>
    <scope>NUCLEOTIDE SEQUENCE [LARGE SCALE GENOMIC DNA]</scope>
    <source>
        <strain>Pm70</strain>
    </source>
</reference>
<evidence type="ECO:0000255" key="1">
    <source>
        <dbReference type="HAMAP-Rule" id="MF_00258"/>
    </source>
</evidence>
<accession>P57887</accession>
<proteinExistence type="inferred from homology"/>
<gene>
    <name evidence="1" type="primary">murI</name>
    <name type="ordered locus">PM0917</name>
</gene>
<comment type="function">
    <text evidence="1">Provides the (R)-glutamate required for cell wall biosynthesis.</text>
</comment>
<comment type="catalytic activity">
    <reaction evidence="1">
        <text>L-glutamate = D-glutamate</text>
        <dbReference type="Rhea" id="RHEA:12813"/>
        <dbReference type="ChEBI" id="CHEBI:29985"/>
        <dbReference type="ChEBI" id="CHEBI:29986"/>
        <dbReference type="EC" id="5.1.1.3"/>
    </reaction>
</comment>
<comment type="pathway">
    <text evidence="1">Cell wall biogenesis; peptidoglycan biosynthesis.</text>
</comment>
<comment type="similarity">
    <text evidence="1">Belongs to the aspartate/glutamate racemases family.</text>
</comment>
<dbReference type="EC" id="5.1.1.3" evidence="1"/>
<dbReference type="EMBL" id="AE004439">
    <property type="protein sequence ID" value="AAK03001.1"/>
    <property type="molecule type" value="Genomic_DNA"/>
</dbReference>
<dbReference type="RefSeq" id="WP_010906916.1">
    <property type="nucleotide sequence ID" value="NC_002663.1"/>
</dbReference>
<dbReference type="SMR" id="P57887"/>
<dbReference type="STRING" id="272843.PM0917"/>
<dbReference type="EnsemblBacteria" id="AAK03001">
    <property type="protein sequence ID" value="AAK03001"/>
    <property type="gene ID" value="PM0917"/>
</dbReference>
<dbReference type="KEGG" id="pmu:PM0917"/>
<dbReference type="PATRIC" id="fig|272843.6.peg.927"/>
<dbReference type="HOGENOM" id="CLU_052344_2_0_6"/>
<dbReference type="OrthoDB" id="9801055at2"/>
<dbReference type="UniPathway" id="UPA00219"/>
<dbReference type="Proteomes" id="UP000000809">
    <property type="component" value="Chromosome"/>
</dbReference>
<dbReference type="GO" id="GO:0008881">
    <property type="term" value="F:glutamate racemase activity"/>
    <property type="evidence" value="ECO:0007669"/>
    <property type="project" value="UniProtKB-UniRule"/>
</dbReference>
<dbReference type="GO" id="GO:0071555">
    <property type="term" value="P:cell wall organization"/>
    <property type="evidence" value="ECO:0007669"/>
    <property type="project" value="UniProtKB-KW"/>
</dbReference>
<dbReference type="GO" id="GO:0009252">
    <property type="term" value="P:peptidoglycan biosynthetic process"/>
    <property type="evidence" value="ECO:0007669"/>
    <property type="project" value="UniProtKB-UniRule"/>
</dbReference>
<dbReference type="GO" id="GO:0008360">
    <property type="term" value="P:regulation of cell shape"/>
    <property type="evidence" value="ECO:0007669"/>
    <property type="project" value="UniProtKB-KW"/>
</dbReference>
<dbReference type="FunFam" id="3.40.50.1860:FF:000001">
    <property type="entry name" value="Glutamate racemase"/>
    <property type="match status" value="1"/>
</dbReference>
<dbReference type="Gene3D" id="3.40.50.1860">
    <property type="match status" value="2"/>
</dbReference>
<dbReference type="HAMAP" id="MF_00258">
    <property type="entry name" value="Glu_racemase"/>
    <property type="match status" value="1"/>
</dbReference>
<dbReference type="InterPro" id="IPR015942">
    <property type="entry name" value="Asp/Glu/hydantoin_racemase"/>
</dbReference>
<dbReference type="InterPro" id="IPR001920">
    <property type="entry name" value="Asp/Glu_race"/>
</dbReference>
<dbReference type="InterPro" id="IPR018187">
    <property type="entry name" value="Asp/Glu_racemase_AS_1"/>
</dbReference>
<dbReference type="InterPro" id="IPR033134">
    <property type="entry name" value="Asp/Glu_racemase_AS_2"/>
</dbReference>
<dbReference type="InterPro" id="IPR004391">
    <property type="entry name" value="Glu_race"/>
</dbReference>
<dbReference type="NCBIfam" id="TIGR00067">
    <property type="entry name" value="glut_race"/>
    <property type="match status" value="1"/>
</dbReference>
<dbReference type="PANTHER" id="PTHR21198">
    <property type="entry name" value="GLUTAMATE RACEMASE"/>
    <property type="match status" value="1"/>
</dbReference>
<dbReference type="PANTHER" id="PTHR21198:SF2">
    <property type="entry name" value="GLUTAMATE RACEMASE"/>
    <property type="match status" value="1"/>
</dbReference>
<dbReference type="Pfam" id="PF01177">
    <property type="entry name" value="Asp_Glu_race"/>
    <property type="match status" value="1"/>
</dbReference>
<dbReference type="SUPFAM" id="SSF53681">
    <property type="entry name" value="Aspartate/glutamate racemase"/>
    <property type="match status" value="2"/>
</dbReference>
<dbReference type="PROSITE" id="PS00923">
    <property type="entry name" value="ASP_GLU_RACEMASE_1"/>
    <property type="match status" value="1"/>
</dbReference>
<dbReference type="PROSITE" id="PS00924">
    <property type="entry name" value="ASP_GLU_RACEMASE_2"/>
    <property type="match status" value="1"/>
</dbReference>
<organism>
    <name type="scientific">Pasteurella multocida (strain Pm70)</name>
    <dbReference type="NCBI Taxonomy" id="272843"/>
    <lineage>
        <taxon>Bacteria</taxon>
        <taxon>Pseudomonadati</taxon>
        <taxon>Pseudomonadota</taxon>
        <taxon>Gammaproteobacteria</taxon>
        <taxon>Pasteurellales</taxon>
        <taxon>Pasteurellaceae</taxon>
        <taxon>Pasteurella</taxon>
    </lineage>
</organism>
<name>MURI_PASMU</name>